<organism>
    <name type="scientific">Prochlorococcus marinus subsp. pastoris (strain CCMP1986 / NIES-2087 / MED4)</name>
    <dbReference type="NCBI Taxonomy" id="59919"/>
    <lineage>
        <taxon>Bacteria</taxon>
        <taxon>Bacillati</taxon>
        <taxon>Cyanobacteriota</taxon>
        <taxon>Cyanophyceae</taxon>
        <taxon>Synechococcales</taxon>
        <taxon>Prochlorococcaceae</taxon>
        <taxon>Prochlorococcus</taxon>
    </lineage>
</organism>
<keyword id="KW-0488">Methylation</keyword>
<keyword id="KW-0687">Ribonucleoprotein</keyword>
<keyword id="KW-0689">Ribosomal protein</keyword>
<keyword id="KW-0694">RNA-binding</keyword>
<keyword id="KW-0699">rRNA-binding</keyword>
<keyword id="KW-0820">tRNA-binding</keyword>
<comment type="function">
    <text evidence="2">With S4 and S5 plays an important role in translational accuracy.</text>
</comment>
<comment type="function">
    <text evidence="2">Interacts with and stabilizes bases of the 16S rRNA that are involved in tRNA selection in the A site and with the mRNA backbone. Located at the interface of the 30S and 50S subunits, it traverses the body of the 30S subunit contacting proteins on the other side and probably holding the rRNA structure together. The combined cluster of proteins S8, S12 and S17 appears to hold together the shoulder and platform of the 30S subunit.</text>
</comment>
<comment type="subunit">
    <text evidence="2">Part of the 30S ribosomal subunit. Contacts proteins S8 and S17. May interact with IF1 in the 30S initiation complex.</text>
</comment>
<comment type="similarity">
    <text evidence="2">Belongs to the universal ribosomal protein uS12 family.</text>
</comment>
<name>RS12_PROMP</name>
<gene>
    <name evidence="2" type="primary">rpsL</name>
    <name evidence="2" type="synonym">rps12</name>
    <name type="ordered locus">PMM1511</name>
</gene>
<feature type="chain" id="PRO_0000146289" description="Small ribosomal subunit protein uS12">
    <location>
        <begin position="1"/>
        <end position="125"/>
    </location>
</feature>
<feature type="region of interest" description="Disordered" evidence="3">
    <location>
        <begin position="1"/>
        <end position="28"/>
    </location>
</feature>
<feature type="region of interest" description="Disordered" evidence="3">
    <location>
        <begin position="104"/>
        <end position="125"/>
    </location>
</feature>
<feature type="modified residue" description="3-methylthioaspartic acid" evidence="1">
    <location>
        <position position="89"/>
    </location>
</feature>
<reference key="1">
    <citation type="journal article" date="2003" name="Nature">
        <title>Genome divergence in two Prochlorococcus ecotypes reflects oceanic niche differentiation.</title>
        <authorList>
            <person name="Rocap G."/>
            <person name="Larimer F.W."/>
            <person name="Lamerdin J.E."/>
            <person name="Malfatti S."/>
            <person name="Chain P."/>
            <person name="Ahlgren N.A."/>
            <person name="Arellano A."/>
            <person name="Coleman M."/>
            <person name="Hauser L."/>
            <person name="Hess W.R."/>
            <person name="Johnson Z.I."/>
            <person name="Land M.L."/>
            <person name="Lindell D."/>
            <person name="Post A.F."/>
            <person name="Regala W."/>
            <person name="Shah M."/>
            <person name="Shaw S.L."/>
            <person name="Steglich C."/>
            <person name="Sullivan M.B."/>
            <person name="Ting C.S."/>
            <person name="Tolonen A."/>
            <person name="Webb E.A."/>
            <person name="Zinser E.R."/>
            <person name="Chisholm S.W."/>
        </authorList>
    </citation>
    <scope>NUCLEOTIDE SEQUENCE [LARGE SCALE GENOMIC DNA]</scope>
    <source>
        <strain>CCMP1986 / NIES-2087 / MED4</strain>
    </source>
</reference>
<protein>
    <recommendedName>
        <fullName evidence="2">Small ribosomal subunit protein uS12</fullName>
    </recommendedName>
    <alternativeName>
        <fullName evidence="4">30S ribosomal protein S12</fullName>
    </alternativeName>
</protein>
<accession>Q7UZY4</accession>
<proteinExistence type="inferred from homology"/>
<evidence type="ECO:0000250" key="1"/>
<evidence type="ECO:0000255" key="2">
    <source>
        <dbReference type="HAMAP-Rule" id="MF_00403"/>
    </source>
</evidence>
<evidence type="ECO:0000256" key="3">
    <source>
        <dbReference type="SAM" id="MobiDB-lite"/>
    </source>
</evidence>
<evidence type="ECO:0000305" key="4"/>
<dbReference type="EMBL" id="BX548174">
    <property type="protein sequence ID" value="CAE19970.1"/>
    <property type="molecule type" value="Genomic_DNA"/>
</dbReference>
<dbReference type="RefSeq" id="WP_011133139.1">
    <property type="nucleotide sequence ID" value="NC_005072.1"/>
</dbReference>
<dbReference type="SMR" id="Q7UZY4"/>
<dbReference type="STRING" id="59919.PMM1511"/>
<dbReference type="KEGG" id="pmm:PMM1511"/>
<dbReference type="eggNOG" id="COG0048">
    <property type="taxonomic scope" value="Bacteria"/>
</dbReference>
<dbReference type="HOGENOM" id="CLU_104295_1_2_3"/>
<dbReference type="OrthoDB" id="9802366at2"/>
<dbReference type="Proteomes" id="UP000001026">
    <property type="component" value="Chromosome"/>
</dbReference>
<dbReference type="GO" id="GO:0015935">
    <property type="term" value="C:small ribosomal subunit"/>
    <property type="evidence" value="ECO:0007669"/>
    <property type="project" value="InterPro"/>
</dbReference>
<dbReference type="GO" id="GO:0019843">
    <property type="term" value="F:rRNA binding"/>
    <property type="evidence" value="ECO:0007669"/>
    <property type="project" value="UniProtKB-UniRule"/>
</dbReference>
<dbReference type="GO" id="GO:0003735">
    <property type="term" value="F:structural constituent of ribosome"/>
    <property type="evidence" value="ECO:0007669"/>
    <property type="project" value="InterPro"/>
</dbReference>
<dbReference type="GO" id="GO:0000049">
    <property type="term" value="F:tRNA binding"/>
    <property type="evidence" value="ECO:0007669"/>
    <property type="project" value="UniProtKB-UniRule"/>
</dbReference>
<dbReference type="GO" id="GO:0006412">
    <property type="term" value="P:translation"/>
    <property type="evidence" value="ECO:0007669"/>
    <property type="project" value="UniProtKB-UniRule"/>
</dbReference>
<dbReference type="CDD" id="cd03368">
    <property type="entry name" value="Ribosomal_S12"/>
    <property type="match status" value="1"/>
</dbReference>
<dbReference type="FunFam" id="2.40.50.140:FF:000001">
    <property type="entry name" value="30S ribosomal protein S12"/>
    <property type="match status" value="1"/>
</dbReference>
<dbReference type="Gene3D" id="2.40.50.140">
    <property type="entry name" value="Nucleic acid-binding proteins"/>
    <property type="match status" value="1"/>
</dbReference>
<dbReference type="HAMAP" id="MF_00403_B">
    <property type="entry name" value="Ribosomal_uS12_B"/>
    <property type="match status" value="1"/>
</dbReference>
<dbReference type="InterPro" id="IPR012340">
    <property type="entry name" value="NA-bd_OB-fold"/>
</dbReference>
<dbReference type="InterPro" id="IPR006032">
    <property type="entry name" value="Ribosomal_uS12"/>
</dbReference>
<dbReference type="InterPro" id="IPR005679">
    <property type="entry name" value="Ribosomal_uS12_bac"/>
</dbReference>
<dbReference type="NCBIfam" id="TIGR00981">
    <property type="entry name" value="rpsL_bact"/>
    <property type="match status" value="1"/>
</dbReference>
<dbReference type="PANTHER" id="PTHR11652">
    <property type="entry name" value="30S RIBOSOMAL PROTEIN S12 FAMILY MEMBER"/>
    <property type="match status" value="1"/>
</dbReference>
<dbReference type="Pfam" id="PF00164">
    <property type="entry name" value="Ribosom_S12_S23"/>
    <property type="match status" value="1"/>
</dbReference>
<dbReference type="PIRSF" id="PIRSF002133">
    <property type="entry name" value="Ribosomal_S12/S23"/>
    <property type="match status" value="1"/>
</dbReference>
<dbReference type="PRINTS" id="PR01034">
    <property type="entry name" value="RIBOSOMALS12"/>
</dbReference>
<dbReference type="SUPFAM" id="SSF50249">
    <property type="entry name" value="Nucleic acid-binding proteins"/>
    <property type="match status" value="1"/>
</dbReference>
<dbReference type="PROSITE" id="PS00055">
    <property type="entry name" value="RIBOSOMAL_S12"/>
    <property type="match status" value="1"/>
</dbReference>
<sequence>MPTISQLIGSERKRLTRKTKSPALKSCPERRGVCTRVYTSTPKKPNSALRKVARVRLTSGFEVTAYIPGIGHNLQEHSVVLLRGGRVKDLPGVRYHIIRGTLDTAGVKDRRQSRSKYGAKAPKND</sequence>